<evidence type="ECO:0000250" key="1">
    <source>
        <dbReference type="UniProtKB" id="B1H1W9"/>
    </source>
</evidence>
<evidence type="ECO:0000255" key="2">
    <source>
        <dbReference type="HAMAP-Rule" id="MF_03069"/>
    </source>
</evidence>
<evidence type="ECO:0000256" key="3">
    <source>
        <dbReference type="SAM" id="MobiDB-lite"/>
    </source>
</evidence>
<accession>Q499A3</accession>
<gene>
    <name evidence="2" type="primary">dnaaf2</name>
    <name evidence="2" type="synonym">ktu</name>
    <name type="ORF">zgc:110294</name>
</gene>
<organism>
    <name type="scientific">Danio rerio</name>
    <name type="common">Zebrafish</name>
    <name type="synonym">Brachydanio rerio</name>
    <dbReference type="NCBI Taxonomy" id="7955"/>
    <lineage>
        <taxon>Eukaryota</taxon>
        <taxon>Metazoa</taxon>
        <taxon>Chordata</taxon>
        <taxon>Craniata</taxon>
        <taxon>Vertebrata</taxon>
        <taxon>Euteleostomi</taxon>
        <taxon>Actinopterygii</taxon>
        <taxon>Neopterygii</taxon>
        <taxon>Teleostei</taxon>
        <taxon>Ostariophysi</taxon>
        <taxon>Cypriniformes</taxon>
        <taxon>Danionidae</taxon>
        <taxon>Danioninae</taxon>
        <taxon>Danio</taxon>
    </lineage>
</organism>
<name>KTU_DANRE</name>
<dbReference type="EMBL" id="BC100006">
    <property type="protein sequence ID" value="AAI00007.1"/>
    <property type="molecule type" value="mRNA"/>
</dbReference>
<dbReference type="RefSeq" id="NP_001028272.1">
    <property type="nucleotide sequence ID" value="NM_001033100.1"/>
</dbReference>
<dbReference type="SMR" id="Q499A3"/>
<dbReference type="STRING" id="7955.ENSDARP00000137300"/>
<dbReference type="PaxDb" id="7955-ENSDARP00000060295"/>
<dbReference type="GeneID" id="606664"/>
<dbReference type="KEGG" id="dre:606664"/>
<dbReference type="AGR" id="ZFIN:ZDB-GENE-050809-128"/>
<dbReference type="CTD" id="55172"/>
<dbReference type="ZFIN" id="ZDB-GENE-050809-128">
    <property type="gene designation" value="dnaaf2"/>
</dbReference>
<dbReference type="eggNOG" id="KOG4356">
    <property type="taxonomic scope" value="Eukaryota"/>
</dbReference>
<dbReference type="InParanoid" id="Q499A3"/>
<dbReference type="OrthoDB" id="546764at2759"/>
<dbReference type="PhylomeDB" id="Q499A3"/>
<dbReference type="PRO" id="PR:Q499A3"/>
<dbReference type="Proteomes" id="UP000000437">
    <property type="component" value="Chromosome 13"/>
</dbReference>
<dbReference type="GO" id="GO:0005737">
    <property type="term" value="C:cytoplasm"/>
    <property type="evidence" value="ECO:0000250"/>
    <property type="project" value="UniProtKB"/>
</dbReference>
<dbReference type="GO" id="GO:0120293">
    <property type="term" value="C:dynein axonemal particle"/>
    <property type="evidence" value="ECO:0000250"/>
    <property type="project" value="UniProtKB"/>
</dbReference>
<dbReference type="GO" id="GO:0005576">
    <property type="term" value="C:extracellular region"/>
    <property type="evidence" value="ECO:0007669"/>
    <property type="project" value="GOC"/>
</dbReference>
<dbReference type="GO" id="GO:0070286">
    <property type="term" value="P:axonemal dynein complex assembly"/>
    <property type="evidence" value="ECO:0000315"/>
    <property type="project" value="ZFIN"/>
</dbReference>
<dbReference type="GO" id="GO:0060285">
    <property type="term" value="P:cilium-dependent cell motility"/>
    <property type="evidence" value="ECO:0000318"/>
    <property type="project" value="GO_Central"/>
</dbReference>
<dbReference type="GO" id="GO:0003351">
    <property type="term" value="P:epithelial cilium movement involved in extracellular fluid movement"/>
    <property type="evidence" value="ECO:0000318"/>
    <property type="project" value="GO_Central"/>
</dbReference>
<dbReference type="HAMAP" id="MF_03069">
    <property type="entry name" value="Kintoun"/>
    <property type="match status" value="1"/>
</dbReference>
<dbReference type="InterPro" id="IPR034727">
    <property type="entry name" value="Kintoun"/>
</dbReference>
<dbReference type="InterPro" id="IPR050734">
    <property type="entry name" value="PIH1/Kintoun_subfamily"/>
</dbReference>
<dbReference type="InterPro" id="IPR012981">
    <property type="entry name" value="PIH1_N"/>
</dbReference>
<dbReference type="InterPro" id="IPR041442">
    <property type="entry name" value="PIH1D1/2/3_CS-like"/>
</dbReference>
<dbReference type="PANTHER" id="PTHR22997">
    <property type="entry name" value="PIH1 DOMAIN-CONTAINING PROTEIN 1"/>
    <property type="match status" value="1"/>
</dbReference>
<dbReference type="PANTHER" id="PTHR22997:SF3">
    <property type="entry name" value="PROTEIN KINTOUN"/>
    <property type="match status" value="1"/>
</dbReference>
<dbReference type="Pfam" id="PF08190">
    <property type="entry name" value="PIH1"/>
    <property type="match status" value="1"/>
</dbReference>
<dbReference type="Pfam" id="PF18201">
    <property type="entry name" value="PIH1_CS"/>
    <property type="match status" value="1"/>
</dbReference>
<sequence length="566" mass="62676">MDADRLAELQLTRAEMRRIGEALQDRRFRELLTEYVEEISSPENRRRYEEEIRRLEEERGAAVQFIHPTPHHVLKGRGPSGKCFINICSDQLIEKPRSEAATDDRGRSGHSWRIPYSLTPGRAGRDAAGAPCVLFDAVFHPDALLMAENNARFMTLIHRTATGGIQDNFRIRLEHVTRLKMMKYKGEPQPTMIRRPNPGQTEAADRGPQQTTGPQQPTGPQQPTDPQQPTDTQQPTDPQQTTGPQQTTGPQQTTGPHQPTDPQQTTGPQQPTDPQQPTGPHQPTDPQQTTDPPPTAPQYRLKYRSVLDLQDYRCCRDSGSAGRPTAIIIEVEVPRLRSAQEAELRVEERRLLLEAPTAEYRLELPLAYPVEEERAEAQFNHTHRLLTVTLPVLKRRRVEEEERRAEEEESRKGGDEDGELHPDCGPDPPMMELQTEDTHTPAADTHTPAADTHTPAADTHTPAAETGAGLGSGVALLSSSNVISVCGADVHQQLEEPGDPSAHTDPADTHPADTDPADTDPAHTDPADTDPADTDPAHTDPAHTDPEMESRIAGLHLQNTLCFQLD</sequence>
<proteinExistence type="evidence at transcript level"/>
<protein>
    <recommendedName>
        <fullName evidence="2">Protein kintoun</fullName>
    </recommendedName>
    <alternativeName>
        <fullName evidence="2">Dynein assembly factor 2, axonemal</fullName>
    </alternativeName>
</protein>
<feature type="chain" id="PRO_0000365798" description="Protein kintoun">
    <location>
        <begin position="1"/>
        <end position="566"/>
    </location>
</feature>
<feature type="region of interest" description="Disordered" evidence="3">
    <location>
        <begin position="183"/>
        <end position="298"/>
    </location>
</feature>
<feature type="region of interest" description="Disordered" evidence="3">
    <location>
        <begin position="399"/>
        <end position="467"/>
    </location>
</feature>
<feature type="region of interest" description="Disordered" evidence="3">
    <location>
        <begin position="493"/>
        <end position="552"/>
    </location>
</feature>
<feature type="compositionally biased region" description="Low complexity" evidence="3">
    <location>
        <begin position="208"/>
        <end position="290"/>
    </location>
</feature>
<feature type="compositionally biased region" description="Basic and acidic residues" evidence="3">
    <location>
        <begin position="399"/>
        <end position="424"/>
    </location>
</feature>
<feature type="compositionally biased region" description="Low complexity" evidence="3">
    <location>
        <begin position="440"/>
        <end position="467"/>
    </location>
</feature>
<feature type="compositionally biased region" description="Basic and acidic residues" evidence="3">
    <location>
        <begin position="535"/>
        <end position="550"/>
    </location>
</feature>
<comment type="function">
    <text evidence="2">Required for cytoplasmic pre-assembly of axonemal dyneins, thereby playing a central role in motility in cilia and flagella. Involved in pre-assembly of dynein arm complexes in the cytoplasm before intraflagellar transport loads them for the ciliary compartment.</text>
</comment>
<comment type="subcellular location">
    <subcellularLocation>
        <location evidence="2">Cytoplasm</location>
    </subcellularLocation>
    <subcellularLocation>
        <location evidence="1">Dynein axonemal particle</location>
    </subcellularLocation>
    <text evidence="2">Localizes in the apical cytoplasm around the gamma-tubulin-positive pericentriolar region, not in the cilia.</text>
</comment>
<comment type="similarity">
    <text evidence="2">Belongs to the PIH1 family. Kintoun subfamily.</text>
</comment>
<reference key="1">
    <citation type="submission" date="2005-08" db="EMBL/GenBank/DDBJ databases">
        <authorList>
            <consortium name="NIH - Zebrafish Gene Collection (ZGC) project"/>
        </authorList>
    </citation>
    <scope>NUCLEOTIDE SEQUENCE [LARGE SCALE MRNA]</scope>
    <source>
        <tissue>Olfactory epithelium</tissue>
    </source>
</reference>
<keyword id="KW-0963">Cytoplasm</keyword>
<keyword id="KW-1185">Reference proteome</keyword>